<name>GLYA_LEPBJ</name>
<reference key="1">
    <citation type="journal article" date="2006" name="Proc. Natl. Acad. Sci. U.S.A.">
        <title>Genome reduction in Leptospira borgpetersenii reflects limited transmission potential.</title>
        <authorList>
            <person name="Bulach D.M."/>
            <person name="Zuerner R.L."/>
            <person name="Wilson P."/>
            <person name="Seemann T."/>
            <person name="McGrath A."/>
            <person name="Cullen P.A."/>
            <person name="Davis J."/>
            <person name="Johnson M."/>
            <person name="Kuczek E."/>
            <person name="Alt D.P."/>
            <person name="Peterson-Burch B."/>
            <person name="Coppel R.L."/>
            <person name="Rood J.I."/>
            <person name="Davies J.K."/>
            <person name="Adler B."/>
        </authorList>
    </citation>
    <scope>NUCLEOTIDE SEQUENCE [LARGE SCALE GENOMIC DNA]</scope>
    <source>
        <strain>JB197</strain>
    </source>
</reference>
<dbReference type="EC" id="2.1.2.1" evidence="1"/>
<dbReference type="EMBL" id="CP000350">
    <property type="protein sequence ID" value="ABJ76624.1"/>
    <property type="molecule type" value="Genomic_DNA"/>
</dbReference>
<dbReference type="RefSeq" id="WP_002726164.1">
    <property type="nucleotide sequence ID" value="NC_008510.1"/>
</dbReference>
<dbReference type="SMR" id="Q04R46"/>
<dbReference type="GeneID" id="61174795"/>
<dbReference type="KEGG" id="lbj:LBJ_2130"/>
<dbReference type="HOGENOM" id="CLU_022477_2_1_12"/>
<dbReference type="UniPathway" id="UPA00193"/>
<dbReference type="UniPathway" id="UPA00288">
    <property type="reaction ID" value="UER01023"/>
</dbReference>
<dbReference type="Proteomes" id="UP000000656">
    <property type="component" value="Chromosome 1"/>
</dbReference>
<dbReference type="GO" id="GO:0005829">
    <property type="term" value="C:cytosol"/>
    <property type="evidence" value="ECO:0007669"/>
    <property type="project" value="TreeGrafter"/>
</dbReference>
<dbReference type="GO" id="GO:0004372">
    <property type="term" value="F:glycine hydroxymethyltransferase activity"/>
    <property type="evidence" value="ECO:0007669"/>
    <property type="project" value="UniProtKB-UniRule"/>
</dbReference>
<dbReference type="GO" id="GO:0030170">
    <property type="term" value="F:pyridoxal phosphate binding"/>
    <property type="evidence" value="ECO:0007669"/>
    <property type="project" value="UniProtKB-UniRule"/>
</dbReference>
<dbReference type="GO" id="GO:0019264">
    <property type="term" value="P:glycine biosynthetic process from serine"/>
    <property type="evidence" value="ECO:0007669"/>
    <property type="project" value="UniProtKB-UniRule"/>
</dbReference>
<dbReference type="GO" id="GO:0035999">
    <property type="term" value="P:tetrahydrofolate interconversion"/>
    <property type="evidence" value="ECO:0007669"/>
    <property type="project" value="UniProtKB-UniRule"/>
</dbReference>
<dbReference type="CDD" id="cd00378">
    <property type="entry name" value="SHMT"/>
    <property type="match status" value="1"/>
</dbReference>
<dbReference type="FunFam" id="3.40.640.10:FF:000001">
    <property type="entry name" value="Serine hydroxymethyltransferase"/>
    <property type="match status" value="1"/>
</dbReference>
<dbReference type="Gene3D" id="3.90.1150.10">
    <property type="entry name" value="Aspartate Aminotransferase, domain 1"/>
    <property type="match status" value="1"/>
</dbReference>
<dbReference type="Gene3D" id="3.40.640.10">
    <property type="entry name" value="Type I PLP-dependent aspartate aminotransferase-like (Major domain)"/>
    <property type="match status" value="1"/>
</dbReference>
<dbReference type="HAMAP" id="MF_00051">
    <property type="entry name" value="SHMT"/>
    <property type="match status" value="1"/>
</dbReference>
<dbReference type="InterPro" id="IPR015424">
    <property type="entry name" value="PyrdxlP-dep_Trfase"/>
</dbReference>
<dbReference type="InterPro" id="IPR015421">
    <property type="entry name" value="PyrdxlP-dep_Trfase_major"/>
</dbReference>
<dbReference type="InterPro" id="IPR015422">
    <property type="entry name" value="PyrdxlP-dep_Trfase_small"/>
</dbReference>
<dbReference type="InterPro" id="IPR001085">
    <property type="entry name" value="Ser_HO-MeTrfase"/>
</dbReference>
<dbReference type="InterPro" id="IPR049943">
    <property type="entry name" value="Ser_HO-MeTrfase-like"/>
</dbReference>
<dbReference type="InterPro" id="IPR019798">
    <property type="entry name" value="Ser_HO-MeTrfase_PLP_BS"/>
</dbReference>
<dbReference type="InterPro" id="IPR039429">
    <property type="entry name" value="SHMT-like_dom"/>
</dbReference>
<dbReference type="NCBIfam" id="NF000586">
    <property type="entry name" value="PRK00011.1"/>
    <property type="match status" value="1"/>
</dbReference>
<dbReference type="PANTHER" id="PTHR11680">
    <property type="entry name" value="SERINE HYDROXYMETHYLTRANSFERASE"/>
    <property type="match status" value="1"/>
</dbReference>
<dbReference type="PANTHER" id="PTHR11680:SF35">
    <property type="entry name" value="SERINE HYDROXYMETHYLTRANSFERASE 1"/>
    <property type="match status" value="1"/>
</dbReference>
<dbReference type="Pfam" id="PF00464">
    <property type="entry name" value="SHMT"/>
    <property type="match status" value="1"/>
</dbReference>
<dbReference type="PIRSF" id="PIRSF000412">
    <property type="entry name" value="SHMT"/>
    <property type="match status" value="1"/>
</dbReference>
<dbReference type="SUPFAM" id="SSF53383">
    <property type="entry name" value="PLP-dependent transferases"/>
    <property type="match status" value="1"/>
</dbReference>
<dbReference type="PROSITE" id="PS00096">
    <property type="entry name" value="SHMT"/>
    <property type="match status" value="1"/>
</dbReference>
<organism>
    <name type="scientific">Leptospira borgpetersenii serovar Hardjo-bovis (strain JB197)</name>
    <dbReference type="NCBI Taxonomy" id="355277"/>
    <lineage>
        <taxon>Bacteria</taxon>
        <taxon>Pseudomonadati</taxon>
        <taxon>Spirochaetota</taxon>
        <taxon>Spirochaetia</taxon>
        <taxon>Leptospirales</taxon>
        <taxon>Leptospiraceae</taxon>
        <taxon>Leptospira</taxon>
    </lineage>
</organism>
<sequence length="415" mass="45085">MQFLPKADPEIFAALKKEDERQENNLEMIASENFVSRAVLEAYTSTLTNKYAEGYPGKRYYNGCHNADIVESLAIERAKELFGAEYANVQPHSGAQANMAVFLACLEPGDSFLGMNLAHGGHLTHGSPVNVSGRIYKPIPYGVDSKTETIDYDEIAKLAREHKPKLIVAGASAYARTIDFSKFAEIAKEVGAKLMADIAHISGLVSTGYHPSPVGLFDFVTTTTHKTLRGPRGGLILSTLENEKVLNSRVFPGIQGGPLMHVIAAKAVAFKEALQPEYKKYIEIVLANAKTLAEVFLKRGYRVVSGGTDNHLVLLDVSVKGLTGVQAADGLDEVGVTVNKNAIPFDKNPPAVASGIRLGTPALTTRGLKPADMETVGNLICDFLDNPNEEKNKKRVKGGVQEITRKFPMDQFRLD</sequence>
<feature type="chain" id="PRO_1000006276" description="Serine hydroxymethyltransferase">
    <location>
        <begin position="1"/>
        <end position="415"/>
    </location>
</feature>
<feature type="binding site" evidence="1">
    <location>
        <position position="117"/>
    </location>
    <ligand>
        <name>(6S)-5,6,7,8-tetrahydrofolate</name>
        <dbReference type="ChEBI" id="CHEBI:57453"/>
    </ligand>
</feature>
<feature type="binding site" evidence="1">
    <location>
        <begin position="121"/>
        <end position="123"/>
    </location>
    <ligand>
        <name>(6S)-5,6,7,8-tetrahydrofolate</name>
        <dbReference type="ChEBI" id="CHEBI:57453"/>
    </ligand>
</feature>
<feature type="site" description="Plays an important role in substrate specificity" evidence="1">
    <location>
        <position position="225"/>
    </location>
</feature>
<feature type="modified residue" description="N6-(pyridoxal phosphate)lysine" evidence="1">
    <location>
        <position position="226"/>
    </location>
</feature>
<accession>Q04R46</accession>
<comment type="function">
    <text evidence="1">Catalyzes the reversible interconversion of serine and glycine with tetrahydrofolate (THF) serving as the one-carbon carrier. This reaction serves as the major source of one-carbon groups required for the biosynthesis of purines, thymidylate, methionine, and other important biomolecules. Also exhibits THF-independent aldolase activity toward beta-hydroxyamino acids, producing glycine and aldehydes, via a retro-aldol mechanism.</text>
</comment>
<comment type="catalytic activity">
    <reaction evidence="1">
        <text>(6R)-5,10-methylene-5,6,7,8-tetrahydrofolate + glycine + H2O = (6S)-5,6,7,8-tetrahydrofolate + L-serine</text>
        <dbReference type="Rhea" id="RHEA:15481"/>
        <dbReference type="ChEBI" id="CHEBI:15377"/>
        <dbReference type="ChEBI" id="CHEBI:15636"/>
        <dbReference type="ChEBI" id="CHEBI:33384"/>
        <dbReference type="ChEBI" id="CHEBI:57305"/>
        <dbReference type="ChEBI" id="CHEBI:57453"/>
        <dbReference type="EC" id="2.1.2.1"/>
    </reaction>
</comment>
<comment type="cofactor">
    <cofactor evidence="1">
        <name>pyridoxal 5'-phosphate</name>
        <dbReference type="ChEBI" id="CHEBI:597326"/>
    </cofactor>
</comment>
<comment type="pathway">
    <text evidence="1">One-carbon metabolism; tetrahydrofolate interconversion.</text>
</comment>
<comment type="pathway">
    <text evidence="1">Amino-acid biosynthesis; glycine biosynthesis; glycine from L-serine: step 1/1.</text>
</comment>
<comment type="subunit">
    <text evidence="1">Homodimer.</text>
</comment>
<comment type="subcellular location">
    <subcellularLocation>
        <location evidence="1">Cytoplasm</location>
    </subcellularLocation>
</comment>
<comment type="similarity">
    <text evidence="1">Belongs to the SHMT family.</text>
</comment>
<evidence type="ECO:0000255" key="1">
    <source>
        <dbReference type="HAMAP-Rule" id="MF_00051"/>
    </source>
</evidence>
<protein>
    <recommendedName>
        <fullName evidence="1">Serine hydroxymethyltransferase</fullName>
        <shortName evidence="1">SHMT</shortName>
        <shortName evidence="1">Serine methylase</shortName>
        <ecNumber evidence="1">2.1.2.1</ecNumber>
    </recommendedName>
</protein>
<gene>
    <name evidence="1" type="primary">glyA</name>
    <name type="ordered locus">LBJ_2130</name>
</gene>
<proteinExistence type="inferred from homology"/>
<keyword id="KW-0028">Amino-acid biosynthesis</keyword>
<keyword id="KW-0963">Cytoplasm</keyword>
<keyword id="KW-0554">One-carbon metabolism</keyword>
<keyword id="KW-0663">Pyridoxal phosphate</keyword>
<keyword id="KW-0808">Transferase</keyword>